<protein>
    <recommendedName>
        <fullName evidence="1">Formate-dependent phosphoribosylglycinamide formyltransferase</fullName>
        <ecNumber evidence="1">6.3.1.21</ecNumber>
    </recommendedName>
    <alternativeName>
        <fullName evidence="1">5'-phosphoribosylglycinamide transformylase 2</fullName>
    </alternativeName>
    <alternativeName>
        <fullName evidence="1">Formate-dependent GAR transformylase</fullName>
    </alternativeName>
    <alternativeName>
        <fullName evidence="1">GAR transformylase 2</fullName>
        <shortName evidence="1">GART 2</shortName>
    </alternativeName>
    <alternativeName>
        <fullName evidence="1">Non-folate glycinamide ribonucleotide transformylase</fullName>
    </alternativeName>
    <alternativeName>
        <fullName evidence="1">Phosphoribosylglycinamide formyltransferase 2</fullName>
    </alternativeName>
</protein>
<name>PURT_BURM7</name>
<keyword id="KW-0067">ATP-binding</keyword>
<keyword id="KW-0436">Ligase</keyword>
<keyword id="KW-0460">Magnesium</keyword>
<keyword id="KW-0479">Metal-binding</keyword>
<keyword id="KW-0547">Nucleotide-binding</keyword>
<keyword id="KW-0658">Purine biosynthesis</keyword>
<comment type="function">
    <text evidence="1">Involved in the de novo purine biosynthesis. Catalyzes the transfer of formate to 5-phospho-ribosyl-glycinamide (GAR), producing 5-phospho-ribosyl-N-formylglycinamide (FGAR). Formate is provided by PurU via hydrolysis of 10-formyl-tetrahydrofolate.</text>
</comment>
<comment type="catalytic activity">
    <reaction evidence="1">
        <text>N(1)-(5-phospho-beta-D-ribosyl)glycinamide + formate + ATP = N(2)-formyl-N(1)-(5-phospho-beta-D-ribosyl)glycinamide + ADP + phosphate + H(+)</text>
        <dbReference type="Rhea" id="RHEA:24829"/>
        <dbReference type="ChEBI" id="CHEBI:15378"/>
        <dbReference type="ChEBI" id="CHEBI:15740"/>
        <dbReference type="ChEBI" id="CHEBI:30616"/>
        <dbReference type="ChEBI" id="CHEBI:43474"/>
        <dbReference type="ChEBI" id="CHEBI:143788"/>
        <dbReference type="ChEBI" id="CHEBI:147286"/>
        <dbReference type="ChEBI" id="CHEBI:456216"/>
        <dbReference type="EC" id="6.3.1.21"/>
    </reaction>
    <physiologicalReaction direction="left-to-right" evidence="1">
        <dbReference type="Rhea" id="RHEA:24830"/>
    </physiologicalReaction>
</comment>
<comment type="pathway">
    <text evidence="1">Purine metabolism; IMP biosynthesis via de novo pathway; N(2)-formyl-N(1)-(5-phospho-D-ribosyl)glycinamide from N(1)-(5-phospho-D-ribosyl)glycinamide (formate route): step 1/1.</text>
</comment>
<comment type="subunit">
    <text evidence="1">Homodimer.</text>
</comment>
<comment type="similarity">
    <text evidence="1">Belongs to the PurK/PurT family.</text>
</comment>
<reference key="1">
    <citation type="journal article" date="2010" name="Genome Biol. Evol.">
        <title>Continuing evolution of Burkholderia mallei through genome reduction and large-scale rearrangements.</title>
        <authorList>
            <person name="Losada L."/>
            <person name="Ronning C.M."/>
            <person name="DeShazer D."/>
            <person name="Woods D."/>
            <person name="Fedorova N."/>
            <person name="Kim H.S."/>
            <person name="Shabalina S.A."/>
            <person name="Pearson T.R."/>
            <person name="Brinkac L."/>
            <person name="Tan P."/>
            <person name="Nandi T."/>
            <person name="Crabtree J."/>
            <person name="Badger J."/>
            <person name="Beckstrom-Sternberg S."/>
            <person name="Saqib M."/>
            <person name="Schutzer S.E."/>
            <person name="Keim P."/>
            <person name="Nierman W.C."/>
        </authorList>
    </citation>
    <scope>NUCLEOTIDE SEQUENCE [LARGE SCALE GENOMIC DNA]</scope>
    <source>
        <strain>NCTC 10247</strain>
    </source>
</reference>
<gene>
    <name evidence="1" type="primary">purT</name>
    <name type="ordered locus">BMA10247_0318</name>
</gene>
<feature type="chain" id="PRO_0000319139" description="Formate-dependent phosphoribosylglycinamide formyltransferase">
    <location>
        <begin position="1"/>
        <end position="404"/>
    </location>
</feature>
<feature type="domain" description="ATP-grasp" evidence="1">
    <location>
        <begin position="123"/>
        <end position="318"/>
    </location>
</feature>
<feature type="binding site" evidence="1">
    <location>
        <begin position="25"/>
        <end position="26"/>
    </location>
    <ligand>
        <name>N(1)-(5-phospho-beta-D-ribosyl)glycinamide</name>
        <dbReference type="ChEBI" id="CHEBI:143788"/>
    </ligand>
</feature>
<feature type="binding site" evidence="1">
    <location>
        <position position="85"/>
    </location>
    <ligand>
        <name>N(1)-(5-phospho-beta-D-ribosyl)glycinamide</name>
        <dbReference type="ChEBI" id="CHEBI:143788"/>
    </ligand>
</feature>
<feature type="binding site" evidence="1">
    <location>
        <position position="118"/>
    </location>
    <ligand>
        <name>ATP</name>
        <dbReference type="ChEBI" id="CHEBI:30616"/>
    </ligand>
</feature>
<feature type="binding site" evidence="1">
    <location>
        <position position="159"/>
    </location>
    <ligand>
        <name>ATP</name>
        <dbReference type="ChEBI" id="CHEBI:30616"/>
    </ligand>
</feature>
<feature type="binding site" evidence="1">
    <location>
        <begin position="164"/>
        <end position="169"/>
    </location>
    <ligand>
        <name>ATP</name>
        <dbReference type="ChEBI" id="CHEBI:30616"/>
    </ligand>
</feature>
<feature type="binding site" evidence="1">
    <location>
        <begin position="199"/>
        <end position="202"/>
    </location>
    <ligand>
        <name>ATP</name>
        <dbReference type="ChEBI" id="CHEBI:30616"/>
    </ligand>
</feature>
<feature type="binding site" evidence="1">
    <location>
        <position position="207"/>
    </location>
    <ligand>
        <name>ATP</name>
        <dbReference type="ChEBI" id="CHEBI:30616"/>
    </ligand>
</feature>
<feature type="binding site" evidence="1">
    <location>
        <position position="277"/>
    </location>
    <ligand>
        <name>Mg(2+)</name>
        <dbReference type="ChEBI" id="CHEBI:18420"/>
    </ligand>
</feature>
<feature type="binding site" evidence="1">
    <location>
        <position position="289"/>
    </location>
    <ligand>
        <name>Mg(2+)</name>
        <dbReference type="ChEBI" id="CHEBI:18420"/>
    </ligand>
</feature>
<feature type="binding site" evidence="1">
    <location>
        <position position="296"/>
    </location>
    <ligand>
        <name>N(1)-(5-phospho-beta-D-ribosyl)glycinamide</name>
        <dbReference type="ChEBI" id="CHEBI:143788"/>
    </ligand>
</feature>
<feature type="binding site" evidence="1">
    <location>
        <position position="365"/>
    </location>
    <ligand>
        <name>N(1)-(5-phospho-beta-D-ribosyl)glycinamide</name>
        <dbReference type="ChEBI" id="CHEBI:143788"/>
    </ligand>
</feature>
<feature type="binding site" evidence="1">
    <location>
        <begin position="372"/>
        <end position="373"/>
    </location>
    <ligand>
        <name>N(1)-(5-phospho-beta-D-ribosyl)glycinamide</name>
        <dbReference type="ChEBI" id="CHEBI:143788"/>
    </ligand>
</feature>
<evidence type="ECO:0000255" key="1">
    <source>
        <dbReference type="HAMAP-Rule" id="MF_01643"/>
    </source>
</evidence>
<proteinExistence type="inferred from homology"/>
<dbReference type="EC" id="6.3.1.21" evidence="1"/>
<dbReference type="EMBL" id="CP000548">
    <property type="protein sequence ID" value="ABO04876.1"/>
    <property type="molecule type" value="Genomic_DNA"/>
</dbReference>
<dbReference type="RefSeq" id="WP_004186479.1">
    <property type="nucleotide sequence ID" value="NZ_CP007802.1"/>
</dbReference>
<dbReference type="SMR" id="A3MI07"/>
<dbReference type="GeneID" id="92979633"/>
<dbReference type="KEGG" id="bmaz:BM44_2682"/>
<dbReference type="KEGG" id="bmn:BMA10247_0318"/>
<dbReference type="PATRIC" id="fig|320389.8.peg.3031"/>
<dbReference type="UniPathway" id="UPA00074">
    <property type="reaction ID" value="UER00127"/>
</dbReference>
<dbReference type="GO" id="GO:0005829">
    <property type="term" value="C:cytosol"/>
    <property type="evidence" value="ECO:0007669"/>
    <property type="project" value="TreeGrafter"/>
</dbReference>
<dbReference type="GO" id="GO:0005524">
    <property type="term" value="F:ATP binding"/>
    <property type="evidence" value="ECO:0007669"/>
    <property type="project" value="UniProtKB-UniRule"/>
</dbReference>
<dbReference type="GO" id="GO:0000287">
    <property type="term" value="F:magnesium ion binding"/>
    <property type="evidence" value="ECO:0007669"/>
    <property type="project" value="InterPro"/>
</dbReference>
<dbReference type="GO" id="GO:0043815">
    <property type="term" value="F:phosphoribosylglycinamide formyltransferase 2 activity"/>
    <property type="evidence" value="ECO:0007669"/>
    <property type="project" value="UniProtKB-UniRule"/>
</dbReference>
<dbReference type="GO" id="GO:0004644">
    <property type="term" value="F:phosphoribosylglycinamide formyltransferase activity"/>
    <property type="evidence" value="ECO:0007669"/>
    <property type="project" value="InterPro"/>
</dbReference>
<dbReference type="GO" id="GO:0006189">
    <property type="term" value="P:'de novo' IMP biosynthetic process"/>
    <property type="evidence" value="ECO:0007669"/>
    <property type="project" value="UniProtKB-UniRule"/>
</dbReference>
<dbReference type="FunFam" id="3.30.1490.20:FF:000013">
    <property type="entry name" value="Formate-dependent phosphoribosylglycinamide formyltransferase"/>
    <property type="match status" value="1"/>
</dbReference>
<dbReference type="FunFam" id="3.40.50.20:FF:000007">
    <property type="entry name" value="Formate-dependent phosphoribosylglycinamide formyltransferase"/>
    <property type="match status" value="1"/>
</dbReference>
<dbReference type="Gene3D" id="3.40.50.20">
    <property type="match status" value="1"/>
</dbReference>
<dbReference type="Gene3D" id="3.30.1490.20">
    <property type="entry name" value="ATP-grasp fold, A domain"/>
    <property type="match status" value="1"/>
</dbReference>
<dbReference type="Gene3D" id="3.30.470.20">
    <property type="entry name" value="ATP-grasp fold, B domain"/>
    <property type="match status" value="1"/>
</dbReference>
<dbReference type="HAMAP" id="MF_01643">
    <property type="entry name" value="PurT"/>
    <property type="match status" value="1"/>
</dbReference>
<dbReference type="InterPro" id="IPR011761">
    <property type="entry name" value="ATP-grasp"/>
</dbReference>
<dbReference type="InterPro" id="IPR003135">
    <property type="entry name" value="ATP-grasp_carboxylate-amine"/>
</dbReference>
<dbReference type="InterPro" id="IPR013815">
    <property type="entry name" value="ATP_grasp_subdomain_1"/>
</dbReference>
<dbReference type="InterPro" id="IPR016185">
    <property type="entry name" value="PreATP-grasp_dom_sf"/>
</dbReference>
<dbReference type="InterPro" id="IPR005862">
    <property type="entry name" value="PurT"/>
</dbReference>
<dbReference type="InterPro" id="IPR054350">
    <property type="entry name" value="PurT/PurK_preATP-grasp"/>
</dbReference>
<dbReference type="InterPro" id="IPR048740">
    <property type="entry name" value="PurT_C"/>
</dbReference>
<dbReference type="InterPro" id="IPR011054">
    <property type="entry name" value="Rudment_hybrid_motif"/>
</dbReference>
<dbReference type="NCBIfam" id="NF006766">
    <property type="entry name" value="PRK09288.1"/>
    <property type="match status" value="1"/>
</dbReference>
<dbReference type="NCBIfam" id="TIGR01142">
    <property type="entry name" value="purT"/>
    <property type="match status" value="1"/>
</dbReference>
<dbReference type="PANTHER" id="PTHR43055">
    <property type="entry name" value="FORMATE-DEPENDENT PHOSPHORIBOSYLGLYCINAMIDE FORMYLTRANSFERASE"/>
    <property type="match status" value="1"/>
</dbReference>
<dbReference type="PANTHER" id="PTHR43055:SF1">
    <property type="entry name" value="FORMATE-DEPENDENT PHOSPHORIBOSYLGLYCINAMIDE FORMYLTRANSFERASE"/>
    <property type="match status" value="1"/>
</dbReference>
<dbReference type="Pfam" id="PF02222">
    <property type="entry name" value="ATP-grasp"/>
    <property type="match status" value="1"/>
</dbReference>
<dbReference type="Pfam" id="PF21244">
    <property type="entry name" value="PurT_C"/>
    <property type="match status" value="1"/>
</dbReference>
<dbReference type="Pfam" id="PF22660">
    <property type="entry name" value="RS_preATP-grasp-like"/>
    <property type="match status" value="1"/>
</dbReference>
<dbReference type="SUPFAM" id="SSF56059">
    <property type="entry name" value="Glutathione synthetase ATP-binding domain-like"/>
    <property type="match status" value="1"/>
</dbReference>
<dbReference type="SUPFAM" id="SSF52440">
    <property type="entry name" value="PreATP-grasp domain"/>
    <property type="match status" value="1"/>
</dbReference>
<dbReference type="SUPFAM" id="SSF51246">
    <property type="entry name" value="Rudiment single hybrid motif"/>
    <property type="match status" value="1"/>
</dbReference>
<dbReference type="PROSITE" id="PS50975">
    <property type="entry name" value="ATP_GRASP"/>
    <property type="match status" value="1"/>
</dbReference>
<sequence length="404" mass="43097">MQIGQRLGTPLSPSATRVMLLGAGELGKEVIIALQRLGVEVIAVDRYPNAPGHQVAHRAHVIDMTDPDALRALVDAERPHLVVPEIEAIATDALAAIEAAGVCEVIPTARATQLTMNREGIRRLAAEELGLPTSPYAFAQSFDEFAAAVARIGFPCVVKPVMSSSGKGQSVLRSEADIEPAWRYAMAGGRVNHGRVIVEGFIRFDYEITQLTVRAIDPASGQTRTSFCAPIGHLQVAGDYVESWQPQPMSAKALERSRDIAHRVTSALGGRGIFGVELFVRGDDVWFSEVSPRPHDTGLVTLASQRQSEFELHARAILGLPVEPALATPAASAVIYGGLDEAGIAFEGVRDALAVPGADLRLFGKPESFAKRRMGVALATGANVDEARERAKRAAAAVRPVSAR</sequence>
<organism>
    <name type="scientific">Burkholderia mallei (strain NCTC 10247)</name>
    <dbReference type="NCBI Taxonomy" id="320389"/>
    <lineage>
        <taxon>Bacteria</taxon>
        <taxon>Pseudomonadati</taxon>
        <taxon>Pseudomonadota</taxon>
        <taxon>Betaproteobacteria</taxon>
        <taxon>Burkholderiales</taxon>
        <taxon>Burkholderiaceae</taxon>
        <taxon>Burkholderia</taxon>
        <taxon>pseudomallei group</taxon>
    </lineage>
</organism>
<accession>A3MI07</accession>